<comment type="alternative products">
    <event type="alternative splicing"/>
    <isoform>
        <id>Q8MPX3-1</id>
        <name evidence="4">a</name>
        <sequence type="displayed"/>
    </isoform>
    <isoform>
        <id>Q8MPX3-2</id>
        <name evidence="5">b</name>
        <sequence type="described" ref="VSP_036008"/>
    </isoform>
</comment>
<protein>
    <recommendedName>
        <fullName>DnaJ homolog dnj-20</fullName>
    </recommendedName>
    <alternativeName>
        <fullName>DnaJ domain protein 20</fullName>
    </alternativeName>
</protein>
<keyword id="KW-0025">Alternative splicing</keyword>
<keyword id="KW-0143">Chaperone</keyword>
<keyword id="KW-1185">Reference proteome</keyword>
<keyword id="KW-0732">Signal</keyword>
<organism>
    <name type="scientific">Caenorhabditis elegans</name>
    <dbReference type="NCBI Taxonomy" id="6239"/>
    <lineage>
        <taxon>Eukaryota</taxon>
        <taxon>Metazoa</taxon>
        <taxon>Ecdysozoa</taxon>
        <taxon>Nematoda</taxon>
        <taxon>Chromadorea</taxon>
        <taxon>Rhabditida</taxon>
        <taxon>Rhabditina</taxon>
        <taxon>Rhabditomorpha</taxon>
        <taxon>Rhabditoidea</taxon>
        <taxon>Rhabditidae</taxon>
        <taxon>Peloderinae</taxon>
        <taxon>Caenorhabditis</taxon>
    </lineage>
</organism>
<dbReference type="EMBL" id="Z47356">
    <property type="protein sequence ID" value="CAA87414.2"/>
    <property type="molecule type" value="Genomic_DNA"/>
</dbReference>
<dbReference type="EMBL" id="Z47356">
    <property type="protein sequence ID" value="CAQ58123.1"/>
    <property type="molecule type" value="Genomic_DNA"/>
</dbReference>
<dbReference type="PIR" id="T24938">
    <property type="entry name" value="T24938"/>
</dbReference>
<dbReference type="RefSeq" id="NP_001370249.1">
    <molecule id="Q8MPX3-1"/>
    <property type="nucleotide sequence ID" value="NM_001383920.2"/>
</dbReference>
<dbReference type="RefSeq" id="NP_496072.2">
    <molecule id="Q8MPX3-2"/>
    <property type="nucleotide sequence ID" value="NM_063671.5"/>
</dbReference>
<dbReference type="RefSeq" id="NP_741036.2">
    <property type="nucleotide sequence ID" value="NM_171030.4"/>
</dbReference>
<dbReference type="SMR" id="Q8MPX3"/>
<dbReference type="BioGRID" id="39837">
    <property type="interactions" value="5"/>
</dbReference>
<dbReference type="FunCoup" id="Q8MPX3">
    <property type="interactions" value="2991"/>
</dbReference>
<dbReference type="IntAct" id="Q8MPX3">
    <property type="interactions" value="1"/>
</dbReference>
<dbReference type="STRING" id="6239.T15H9.7a.1"/>
<dbReference type="PaxDb" id="6239-T15H9.7a"/>
<dbReference type="PeptideAtlas" id="Q8MPX3"/>
<dbReference type="EnsemblMetazoa" id="T15H9.7a.1">
    <molecule id="Q8MPX3-1"/>
    <property type="protein sequence ID" value="T15H9.7a.1"/>
    <property type="gene ID" value="WBGene00001038"/>
</dbReference>
<dbReference type="EnsemblMetazoa" id="T15H9.7b.1">
    <molecule id="Q8MPX3-2"/>
    <property type="protein sequence ID" value="T15H9.7b.1"/>
    <property type="gene ID" value="WBGene00001038"/>
</dbReference>
<dbReference type="GeneID" id="174514"/>
<dbReference type="KEGG" id="cel:CELE_T15H9.7"/>
<dbReference type="UCSC" id="T15H9.7">
    <molecule id="Q8MPX3-1"/>
    <property type="organism name" value="c. elegans"/>
</dbReference>
<dbReference type="AGR" id="WB:WBGene00001038"/>
<dbReference type="CTD" id="174514"/>
<dbReference type="WormBase" id="T15H9.7a">
    <molecule id="Q8MPX3-1"/>
    <property type="protein sequence ID" value="CE01664"/>
    <property type="gene ID" value="WBGene00001038"/>
    <property type="gene designation" value="dnj-20"/>
</dbReference>
<dbReference type="WormBase" id="T15H9.7b">
    <molecule id="Q8MPX3-2"/>
    <property type="protein sequence ID" value="CE30689"/>
    <property type="gene ID" value="WBGene00001038"/>
    <property type="gene designation" value="dnj-20"/>
</dbReference>
<dbReference type="eggNOG" id="KOG0713">
    <property type="taxonomic scope" value="Eukaryota"/>
</dbReference>
<dbReference type="GeneTree" id="ENSGT00940000155792"/>
<dbReference type="HOGENOM" id="CLU_017633_0_0_1"/>
<dbReference type="InParanoid" id="Q8MPX3"/>
<dbReference type="OMA" id="FAGRDFY"/>
<dbReference type="OrthoDB" id="550424at2759"/>
<dbReference type="PhylomeDB" id="Q8MPX3"/>
<dbReference type="PRO" id="PR:Q8MPX3"/>
<dbReference type="Proteomes" id="UP000001940">
    <property type="component" value="Chromosome II"/>
</dbReference>
<dbReference type="Bgee" id="WBGene00001038">
    <property type="expression patterns" value="Expressed in pharyngeal muscle cell (C elegans) and 4 other cell types or tissues"/>
</dbReference>
<dbReference type="GO" id="GO:0005783">
    <property type="term" value="C:endoplasmic reticulum"/>
    <property type="evidence" value="ECO:0000318"/>
    <property type="project" value="GO_Central"/>
</dbReference>
<dbReference type="GO" id="GO:0051787">
    <property type="term" value="F:misfolded protein binding"/>
    <property type="evidence" value="ECO:0000318"/>
    <property type="project" value="GO_Central"/>
</dbReference>
<dbReference type="GO" id="GO:0051082">
    <property type="term" value="F:unfolded protein binding"/>
    <property type="evidence" value="ECO:0000318"/>
    <property type="project" value="GO_Central"/>
</dbReference>
<dbReference type="GO" id="GO:0006457">
    <property type="term" value="P:protein folding"/>
    <property type="evidence" value="ECO:0007669"/>
    <property type="project" value="InterPro"/>
</dbReference>
<dbReference type="GO" id="GO:0051604">
    <property type="term" value="P:protein maturation"/>
    <property type="evidence" value="ECO:0000318"/>
    <property type="project" value="GO_Central"/>
</dbReference>
<dbReference type="CDD" id="cd06257">
    <property type="entry name" value="DnaJ"/>
    <property type="match status" value="1"/>
</dbReference>
<dbReference type="CDD" id="cd10747">
    <property type="entry name" value="DnaJ_C"/>
    <property type="match status" value="1"/>
</dbReference>
<dbReference type="FunFam" id="2.60.260.20:FF:000013">
    <property type="entry name" value="DnaJ subfamily B member 11"/>
    <property type="match status" value="1"/>
</dbReference>
<dbReference type="Gene3D" id="1.10.287.110">
    <property type="entry name" value="DnaJ domain"/>
    <property type="match status" value="1"/>
</dbReference>
<dbReference type="Gene3D" id="2.60.260.20">
    <property type="entry name" value="Urease metallochaperone UreE, N-terminal domain"/>
    <property type="match status" value="2"/>
</dbReference>
<dbReference type="InterPro" id="IPR051736">
    <property type="entry name" value="DnaJ-B11-like"/>
</dbReference>
<dbReference type="InterPro" id="IPR002939">
    <property type="entry name" value="DnaJ_C"/>
</dbReference>
<dbReference type="InterPro" id="IPR001623">
    <property type="entry name" value="DnaJ_domain"/>
</dbReference>
<dbReference type="InterPro" id="IPR018253">
    <property type="entry name" value="DnaJ_domain_CS"/>
</dbReference>
<dbReference type="InterPro" id="IPR008971">
    <property type="entry name" value="HSP40/DnaJ_pept-bd"/>
</dbReference>
<dbReference type="InterPro" id="IPR036869">
    <property type="entry name" value="J_dom_sf"/>
</dbReference>
<dbReference type="PANTHER" id="PTHR44298">
    <property type="entry name" value="DNAJ HOMOLOG SUBFAMILY B MEMBER 11"/>
    <property type="match status" value="1"/>
</dbReference>
<dbReference type="PANTHER" id="PTHR44298:SF1">
    <property type="entry name" value="DNAJ HOMOLOG SUBFAMILY B MEMBER 11"/>
    <property type="match status" value="1"/>
</dbReference>
<dbReference type="Pfam" id="PF00226">
    <property type="entry name" value="DnaJ"/>
    <property type="match status" value="1"/>
</dbReference>
<dbReference type="Pfam" id="PF01556">
    <property type="entry name" value="DnaJ_C"/>
    <property type="match status" value="1"/>
</dbReference>
<dbReference type="PRINTS" id="PR00625">
    <property type="entry name" value="JDOMAIN"/>
</dbReference>
<dbReference type="SMART" id="SM00271">
    <property type="entry name" value="DnaJ"/>
    <property type="match status" value="1"/>
</dbReference>
<dbReference type="SUPFAM" id="SSF46565">
    <property type="entry name" value="Chaperone J-domain"/>
    <property type="match status" value="1"/>
</dbReference>
<dbReference type="SUPFAM" id="SSF49493">
    <property type="entry name" value="HSP40/DnaJ peptide-binding domain"/>
    <property type="match status" value="2"/>
</dbReference>
<dbReference type="PROSITE" id="PS00636">
    <property type="entry name" value="DNAJ_1"/>
    <property type="match status" value="1"/>
</dbReference>
<dbReference type="PROSITE" id="PS50076">
    <property type="entry name" value="DNAJ_2"/>
    <property type="match status" value="1"/>
</dbReference>
<proteinExistence type="inferred from homology"/>
<name>DNJ20_CAEEL</name>
<accession>Q8MPX3</accession>
<accession>B3GWA8</accession>
<accession>Q10005</accession>
<evidence type="ECO:0000255" key="1"/>
<evidence type="ECO:0000255" key="2">
    <source>
        <dbReference type="PROSITE-ProRule" id="PRU00286"/>
    </source>
</evidence>
<evidence type="ECO:0000305" key="3"/>
<evidence type="ECO:0000312" key="4">
    <source>
        <dbReference type="WormBase" id="T15H9.7a"/>
    </source>
</evidence>
<evidence type="ECO:0000312" key="5">
    <source>
        <dbReference type="WormBase" id="T15H9.7b"/>
    </source>
</evidence>
<gene>
    <name evidence="4" type="primary">dnj-20</name>
    <name evidence="4" type="ORF">T15H9.7</name>
</gene>
<feature type="signal peptide" evidence="1">
    <location>
        <begin position="1"/>
        <end position="21"/>
    </location>
</feature>
<feature type="chain" id="PRO_0000007270" description="DnaJ homolog dnj-20">
    <location>
        <begin position="22"/>
        <end position="355"/>
    </location>
</feature>
<feature type="domain" description="J" evidence="2">
    <location>
        <begin position="24"/>
        <end position="89"/>
    </location>
</feature>
<feature type="splice variant" id="VSP_036008" description="In isoform b." evidence="3">
    <location>
        <begin position="1"/>
        <end position="273"/>
    </location>
</feature>
<reference key="1">
    <citation type="journal article" date="1998" name="Science">
        <title>Genome sequence of the nematode C. elegans: a platform for investigating biology.</title>
        <authorList>
            <consortium name="The C. elegans sequencing consortium"/>
        </authorList>
    </citation>
    <scope>NUCLEOTIDE SEQUENCE [LARGE SCALE GENOMIC DNA]</scope>
    <scope>ALTERNATIVE SPLICING</scope>
    <source>
        <strain>Bristol N2</strain>
    </source>
</reference>
<sequence>MRILNVSLLVLASSLVAFVECGRDFYKILGVAKNANANQIKKAYRKLAKELHPDRNQDDEMANEKFQDLSSAYEVLSDKEKRAMYDRHGEEGVAKMGGGGGGGHDPFSSFFGDFFGGGGGHGGEEGTPKGADVTIDLFVTLEEVYNGHFVEIKRKKAVYKQTSGTRQCNCRHEMRTEQMGQGRFQMFQVKVCDECPNVKLVQENKVLEVEVEVGADNGHQQIFHGEGEPHIEGDPGDLKFKIRIQKHPRFERKGDDLYTNVTISLQDALNGFEMEIQHLDGHIVKVQRDKVTWPGARLRKKDEGMPSLEDNNKKGMLVVTFDVEFPKTELSDEQKAQIIEILQQNTVKPKAYNGL</sequence>